<sequence length="911" mass="102170">MTEGKSIINANLTPLPDKVGVDGLEDKWRAVWDEDGTYKFRNTRDRKAVYSIDTPPPTVSGSLHVGHVFSYTHTDVIARYKRMRGYDVFYPMGWDDNGLPTERRVQNYYGVRVDVSLPYDPDFKPPFEGTDGKKIDAKDQVPISRKNFIELCERLTAQDEKLFEALWRKLGLSIDWSQTYHTIGQHPQRVAQKAFLRNLARGEAYQQDAPGLWDVTFQTAVAQAELESREYPGFYHKVAFRFEDGTPIYIETTRPELLAACTSLIANPNDERYKQYFGQYVYSPLFKVKVPILAHPAAEMDKGAGIAMCCTFGDVTDVEWWRDLKLPTRPIIQRNGRIVMDTPDWIEDPAGREVFAETAGKTTFSARKIIVDKLRESGDLDGEPTPTKRMTNFYEKGDKPLEIVTSRQWYLKNGGTDAKLNAELIERGKELEFHPDFMRVRYENWVHGLNGDWLISRQRFFGVPFPLWYPVNASGEPDYDHPITPSEDRLPIDPTIDVPEGYDESQRDVPGGFTAEKDIMDTWATSSLTPQIVTHWAEPDEASQALFKSTFPMDLRPQGQDIIRTWLFSTVDRAHLENKCLPWAHATLSGWILDPDHKKMSKSKGNVVVPNEPIEKFGADAVRYWAAAARLGLDATYDIGQMKIGRRLAIKLLNATKFALAIGREDENHHVGAAAEAAWNPADVTEPLDRAAMAKLAVVVRQATEALESYEHSKALEVIESYFWQFCDDYIELVKNRAYGTPDEHGNVPSEKAVKSARTALGLGLDAFARLLAPYLPYATEEVWSWMHAGSGSVHRAAWPVVDPYVEAATGASPELLTWAGKAVEQLRKIKSEAKVSMKTPILSVALSAASEGVDAIHAALGDIAQAGRVVGKFDLVAKHAEESAAEDAPETEVAVEASELGEPPVKKPKH</sequence>
<proteinExistence type="inferred from homology"/>
<accession>B7GTW0</accession>
<accession>E8MP49</accession>
<name>SYV_BIFLS</name>
<feature type="chain" id="PRO_1000189252" description="Valine--tRNA ligase">
    <location>
        <begin position="1"/>
        <end position="911"/>
    </location>
</feature>
<feature type="region of interest" description="Disordered" evidence="2">
    <location>
        <begin position="882"/>
        <end position="911"/>
    </location>
</feature>
<feature type="short sequence motif" description="'HIGH' region">
    <location>
        <begin position="57"/>
        <end position="67"/>
    </location>
</feature>
<feature type="short sequence motif" description="'KMSKS' region">
    <location>
        <begin position="599"/>
        <end position="603"/>
    </location>
</feature>
<feature type="binding site" evidence="1">
    <location>
        <position position="602"/>
    </location>
    <ligand>
        <name>ATP</name>
        <dbReference type="ChEBI" id="CHEBI:30616"/>
    </ligand>
</feature>
<protein>
    <recommendedName>
        <fullName evidence="1">Valine--tRNA ligase</fullName>
        <ecNumber evidence="1">6.1.1.9</ecNumber>
    </recommendedName>
    <alternativeName>
        <fullName evidence="1">Valyl-tRNA synthetase</fullName>
        <shortName evidence="1">ValRS</shortName>
    </alternativeName>
</protein>
<gene>
    <name evidence="1" type="primary">valS</name>
    <name type="ordered locus">Blon_0275</name>
    <name type="ordered locus">BLIJ_0279</name>
</gene>
<keyword id="KW-0030">Aminoacyl-tRNA synthetase</keyword>
<keyword id="KW-0067">ATP-binding</keyword>
<keyword id="KW-0963">Cytoplasm</keyword>
<keyword id="KW-0436">Ligase</keyword>
<keyword id="KW-0547">Nucleotide-binding</keyword>
<keyword id="KW-0648">Protein biosynthesis</keyword>
<evidence type="ECO:0000255" key="1">
    <source>
        <dbReference type="HAMAP-Rule" id="MF_02005"/>
    </source>
</evidence>
<evidence type="ECO:0000256" key="2">
    <source>
        <dbReference type="SAM" id="MobiDB-lite"/>
    </source>
</evidence>
<organism>
    <name type="scientific">Bifidobacterium longum subsp. infantis (strain ATCC 15697 / DSM 20088 / JCM 1222 / NCTC 11817 / S12)</name>
    <dbReference type="NCBI Taxonomy" id="391904"/>
    <lineage>
        <taxon>Bacteria</taxon>
        <taxon>Bacillati</taxon>
        <taxon>Actinomycetota</taxon>
        <taxon>Actinomycetes</taxon>
        <taxon>Bifidobacteriales</taxon>
        <taxon>Bifidobacteriaceae</taxon>
        <taxon>Bifidobacterium</taxon>
    </lineage>
</organism>
<dbReference type="EC" id="6.1.1.9" evidence="1"/>
<dbReference type="EMBL" id="CP001095">
    <property type="protein sequence ID" value="ACJ51401.1"/>
    <property type="molecule type" value="Genomic_DNA"/>
</dbReference>
<dbReference type="EMBL" id="AP010889">
    <property type="protein sequence ID" value="BAJ67873.1"/>
    <property type="molecule type" value="Genomic_DNA"/>
</dbReference>
<dbReference type="RefSeq" id="WP_012576712.1">
    <property type="nucleotide sequence ID" value="NC_011593.1"/>
</dbReference>
<dbReference type="SMR" id="B7GTW0"/>
<dbReference type="KEGG" id="bln:Blon_0275"/>
<dbReference type="KEGG" id="blon:BLIJ_0279"/>
<dbReference type="PATRIC" id="fig|391904.8.peg.280"/>
<dbReference type="HOGENOM" id="CLU_001493_0_2_11"/>
<dbReference type="Proteomes" id="UP000001360">
    <property type="component" value="Chromosome"/>
</dbReference>
<dbReference type="GO" id="GO:0005829">
    <property type="term" value="C:cytosol"/>
    <property type="evidence" value="ECO:0007669"/>
    <property type="project" value="TreeGrafter"/>
</dbReference>
<dbReference type="GO" id="GO:0002161">
    <property type="term" value="F:aminoacyl-tRNA deacylase activity"/>
    <property type="evidence" value="ECO:0007669"/>
    <property type="project" value="InterPro"/>
</dbReference>
<dbReference type="GO" id="GO:0005524">
    <property type="term" value="F:ATP binding"/>
    <property type="evidence" value="ECO:0007669"/>
    <property type="project" value="UniProtKB-UniRule"/>
</dbReference>
<dbReference type="GO" id="GO:0004832">
    <property type="term" value="F:valine-tRNA ligase activity"/>
    <property type="evidence" value="ECO:0007669"/>
    <property type="project" value="UniProtKB-UniRule"/>
</dbReference>
<dbReference type="GO" id="GO:0006438">
    <property type="term" value="P:valyl-tRNA aminoacylation"/>
    <property type="evidence" value="ECO:0007669"/>
    <property type="project" value="UniProtKB-UniRule"/>
</dbReference>
<dbReference type="CDD" id="cd07962">
    <property type="entry name" value="Anticodon_Ia_Val"/>
    <property type="match status" value="1"/>
</dbReference>
<dbReference type="Gene3D" id="3.40.50.620">
    <property type="entry name" value="HUPs"/>
    <property type="match status" value="2"/>
</dbReference>
<dbReference type="Gene3D" id="1.10.730.10">
    <property type="entry name" value="Isoleucyl-tRNA Synthetase, Domain 1"/>
    <property type="match status" value="1"/>
</dbReference>
<dbReference type="Gene3D" id="3.90.740.10">
    <property type="entry name" value="Valyl/Leucyl/Isoleucyl-tRNA synthetase, editing domain"/>
    <property type="match status" value="1"/>
</dbReference>
<dbReference type="HAMAP" id="MF_02005">
    <property type="entry name" value="Val_tRNA_synth_type2"/>
    <property type="match status" value="1"/>
</dbReference>
<dbReference type="InterPro" id="IPR001412">
    <property type="entry name" value="aa-tRNA-synth_I_CS"/>
</dbReference>
<dbReference type="InterPro" id="IPR002300">
    <property type="entry name" value="aa-tRNA-synth_Ia"/>
</dbReference>
<dbReference type="InterPro" id="IPR033705">
    <property type="entry name" value="Anticodon_Ia_Val"/>
</dbReference>
<dbReference type="InterPro" id="IPR013155">
    <property type="entry name" value="M/V/L/I-tRNA-synth_anticd-bd"/>
</dbReference>
<dbReference type="InterPro" id="IPR014729">
    <property type="entry name" value="Rossmann-like_a/b/a_fold"/>
</dbReference>
<dbReference type="InterPro" id="IPR009080">
    <property type="entry name" value="tRNAsynth_Ia_anticodon-bd"/>
</dbReference>
<dbReference type="InterPro" id="IPR009008">
    <property type="entry name" value="Val/Leu/Ile-tRNA-synth_edit"/>
</dbReference>
<dbReference type="InterPro" id="IPR022874">
    <property type="entry name" value="Valine-tRNA_ligase_type_2"/>
</dbReference>
<dbReference type="InterPro" id="IPR002303">
    <property type="entry name" value="Valyl-tRNA_ligase"/>
</dbReference>
<dbReference type="InterPro" id="IPR048044">
    <property type="entry name" value="Valyl-tRNA_ligase_actino"/>
</dbReference>
<dbReference type="NCBIfam" id="NF000540">
    <property type="entry name" value="alt_ValS"/>
    <property type="match status" value="1"/>
</dbReference>
<dbReference type="NCBIfam" id="NF009687">
    <property type="entry name" value="PRK13208.1"/>
    <property type="match status" value="1"/>
</dbReference>
<dbReference type="PANTHER" id="PTHR11946:SF93">
    <property type="entry name" value="VALINE--TRNA LIGASE, CHLOROPLASTIC_MITOCHONDRIAL 2"/>
    <property type="match status" value="1"/>
</dbReference>
<dbReference type="PANTHER" id="PTHR11946">
    <property type="entry name" value="VALYL-TRNA SYNTHETASES"/>
    <property type="match status" value="1"/>
</dbReference>
<dbReference type="Pfam" id="PF08264">
    <property type="entry name" value="Anticodon_1"/>
    <property type="match status" value="1"/>
</dbReference>
<dbReference type="Pfam" id="PF00133">
    <property type="entry name" value="tRNA-synt_1"/>
    <property type="match status" value="2"/>
</dbReference>
<dbReference type="PRINTS" id="PR00986">
    <property type="entry name" value="TRNASYNTHVAL"/>
</dbReference>
<dbReference type="SUPFAM" id="SSF47323">
    <property type="entry name" value="Anticodon-binding domain of a subclass of class I aminoacyl-tRNA synthetases"/>
    <property type="match status" value="1"/>
</dbReference>
<dbReference type="SUPFAM" id="SSF52374">
    <property type="entry name" value="Nucleotidylyl transferase"/>
    <property type="match status" value="1"/>
</dbReference>
<dbReference type="SUPFAM" id="SSF50677">
    <property type="entry name" value="ValRS/IleRS/LeuRS editing domain"/>
    <property type="match status" value="1"/>
</dbReference>
<dbReference type="PROSITE" id="PS00178">
    <property type="entry name" value="AA_TRNA_LIGASE_I"/>
    <property type="match status" value="1"/>
</dbReference>
<comment type="function">
    <text evidence="1">Catalyzes the attachment of valine to tRNA(Val). As ValRS can inadvertently accommodate and process structurally similar amino acids such as threonine, to avoid such errors, it has a 'posttransfer' editing activity that hydrolyzes mischarged Thr-tRNA(Val) in a tRNA-dependent manner.</text>
</comment>
<comment type="catalytic activity">
    <reaction evidence="1">
        <text>tRNA(Val) + L-valine + ATP = L-valyl-tRNA(Val) + AMP + diphosphate</text>
        <dbReference type="Rhea" id="RHEA:10704"/>
        <dbReference type="Rhea" id="RHEA-COMP:9672"/>
        <dbReference type="Rhea" id="RHEA-COMP:9708"/>
        <dbReference type="ChEBI" id="CHEBI:30616"/>
        <dbReference type="ChEBI" id="CHEBI:33019"/>
        <dbReference type="ChEBI" id="CHEBI:57762"/>
        <dbReference type="ChEBI" id="CHEBI:78442"/>
        <dbReference type="ChEBI" id="CHEBI:78537"/>
        <dbReference type="ChEBI" id="CHEBI:456215"/>
        <dbReference type="EC" id="6.1.1.9"/>
    </reaction>
</comment>
<comment type="subunit">
    <text evidence="1">Monomer.</text>
</comment>
<comment type="subcellular location">
    <subcellularLocation>
        <location evidence="1">Cytoplasm</location>
    </subcellularLocation>
</comment>
<comment type="domain">
    <text evidence="1">ValRS has two distinct active sites: one for aminoacylation and one for editing. The misactivated threonine is translocated from the active site to the editing site.</text>
</comment>
<comment type="similarity">
    <text evidence="1">Belongs to the class-I aminoacyl-tRNA synthetase family. ValS type 2 subfamily.</text>
</comment>
<reference key="1">
    <citation type="journal article" date="2008" name="Proc. Natl. Acad. Sci. U.S.A.">
        <title>The genome sequence of Bifidobacterium longum subsp. infantis reveals adaptations for milk utilization within the infant microbiome.</title>
        <authorList>
            <person name="Sela D.A."/>
            <person name="Chapman J."/>
            <person name="Adeuya A."/>
            <person name="Kim J.H."/>
            <person name="Chen F."/>
            <person name="Whitehead T.R."/>
            <person name="Lapidus A."/>
            <person name="Rokhsar D.S."/>
            <person name="Lebrilla C.B."/>
            <person name="German J.B."/>
            <person name="Price N.P."/>
            <person name="Richardson P.M."/>
            <person name="Mills D.A."/>
        </authorList>
    </citation>
    <scope>NUCLEOTIDE SEQUENCE [LARGE SCALE GENOMIC DNA]</scope>
    <source>
        <strain>ATCC 15697 / DSM 20088 / JCM 1222 / NCTC 11817 / S12</strain>
    </source>
</reference>
<reference key="2">
    <citation type="journal article" date="2011" name="Nature">
        <title>Bifidobacteria can protect from enteropathogenic infection through production of acetate.</title>
        <authorList>
            <person name="Fukuda S."/>
            <person name="Toh H."/>
            <person name="Hase K."/>
            <person name="Oshima K."/>
            <person name="Nakanishi Y."/>
            <person name="Yoshimura K."/>
            <person name="Tobe T."/>
            <person name="Clarke J.M."/>
            <person name="Topping D.L."/>
            <person name="Suzuki T."/>
            <person name="Taylor T.D."/>
            <person name="Itoh K."/>
            <person name="Kikuchi J."/>
            <person name="Morita H."/>
            <person name="Hattori M."/>
            <person name="Ohno H."/>
        </authorList>
    </citation>
    <scope>NUCLEOTIDE SEQUENCE [LARGE SCALE GENOMIC DNA]</scope>
    <source>
        <strain>ATCC 15697 / DSM 20088 / JCM 1222 / NCTC 11817 / S12</strain>
    </source>
</reference>